<evidence type="ECO:0000255" key="1">
    <source>
        <dbReference type="HAMAP-Rule" id="MF_01379"/>
    </source>
</evidence>
<protein>
    <recommendedName>
        <fullName evidence="1">Photosystem II protein D1</fullName>
        <shortName evidence="1">PSII D1 protein</shortName>
        <ecNumber evidence="1">1.10.3.9</ecNumber>
    </recommendedName>
    <alternativeName>
        <fullName evidence="1">Photosystem II Q(B) protein</fullName>
    </alternativeName>
</protein>
<sequence length="353" mass="38879">MTAILERRESTSLWGRFCNWITSTENRLYIGWFGVLMIPTLLTATSVFIIAFIAAPPVDIDGIREPVSGSLLYGNNIISGAIIPTSAAIGLHFYPIWEAASVDEWLYNGGPYELIVLHFLLGVACYMGREWELSFRLGMRPWIAVAYSAPVAAATAVFLIYPIGQGSFSDGMPLGISGTFNFMIVFQAEHNILMHPFHMLGVAGVFGGSLFSAMHGSLVTSSLIRETTENESANAGYRFGQEEETYNIVAAHGYFGRLIFQYASFNNSRSLHFFLAAWPVVGIWFTALGISTMAFNLNGFNFNQSVVDSQGRVINTWADIINRANLGMEVMHERNAHNFPLDLAAVEVPSTNG</sequence>
<comment type="function">
    <text evidence="1">Photosystem II (PSII) is a light-driven water:plastoquinone oxidoreductase that uses light energy to abstract electrons from H(2)O, generating O(2) and a proton gradient subsequently used for ATP formation. It consists of a core antenna complex that captures photons, and an electron transfer chain that converts photonic excitation into a charge separation. The D1/D2 (PsbA/PsbD) reaction center heterodimer binds P680, the primary electron donor of PSII as well as several subsequent electron acceptors.</text>
</comment>
<comment type="catalytic activity">
    <reaction evidence="1">
        <text>2 a plastoquinone + 4 hnu + 2 H2O = 2 a plastoquinol + O2</text>
        <dbReference type="Rhea" id="RHEA:36359"/>
        <dbReference type="Rhea" id="RHEA-COMP:9561"/>
        <dbReference type="Rhea" id="RHEA-COMP:9562"/>
        <dbReference type="ChEBI" id="CHEBI:15377"/>
        <dbReference type="ChEBI" id="CHEBI:15379"/>
        <dbReference type="ChEBI" id="CHEBI:17757"/>
        <dbReference type="ChEBI" id="CHEBI:30212"/>
        <dbReference type="ChEBI" id="CHEBI:62192"/>
        <dbReference type="EC" id="1.10.3.9"/>
    </reaction>
</comment>
<comment type="cofactor">
    <text evidence="1">The D1/D2 heterodimer binds P680, chlorophylls that are the primary electron donor of PSII, and subsequent electron acceptors. It shares a non-heme iron and each subunit binds pheophytin, quinone, additional chlorophylls, carotenoids and lipids. D1 provides most of the ligands for the Mn4-Ca-O5 cluster of the oxygen-evolving complex (OEC). There is also a Cl(-1) ion associated with D1 and D2, which is required for oxygen evolution. The PSII complex binds additional chlorophylls, carotenoids and specific lipids.</text>
</comment>
<comment type="subunit">
    <text evidence="1">PSII is composed of 1 copy each of membrane proteins PsbA, PsbB, PsbC, PsbD, PsbE, PsbF, PsbH, PsbI, PsbJ, PsbK, PsbL, PsbM, PsbT, PsbX, PsbY, PsbZ, Psb30/Ycf12, at least 3 peripheral proteins of the oxygen-evolving complex and a large number of cofactors. It forms dimeric complexes.</text>
</comment>
<comment type="subcellular location">
    <subcellularLocation>
        <location evidence="1">Plastid</location>
        <location evidence="1">Chloroplast thylakoid membrane</location>
        <topology evidence="1">Multi-pass membrane protein</topology>
    </subcellularLocation>
</comment>
<comment type="PTM">
    <text evidence="1">Tyr-161 forms a radical intermediate that is referred to as redox-active TyrZ, YZ or Y-Z.</text>
</comment>
<comment type="PTM">
    <text evidence="1">C-terminally processed by CTPA; processing is essential to allow assembly of the oxygen-evolving complex and thus photosynthetic growth.</text>
</comment>
<comment type="miscellaneous">
    <text evidence="1">2 of the reaction center chlorophylls (ChlD1 and ChlD2) are entirely coordinated by water.</text>
</comment>
<comment type="miscellaneous">
    <text evidence="1">Herbicides such as atrazine, BNT, diuron or ioxynil bind in the Q(B) binding site and block subsequent electron transfer.</text>
</comment>
<comment type="similarity">
    <text evidence="1">Belongs to the reaction center PufL/M/PsbA/D family.</text>
</comment>
<organism>
    <name type="scientific">Calycanthus floridus var. glaucus</name>
    <name type="common">Eastern sweetshrub</name>
    <name type="synonym">Calycanthus fertilis var. ferax</name>
    <dbReference type="NCBI Taxonomy" id="212734"/>
    <lineage>
        <taxon>Eukaryota</taxon>
        <taxon>Viridiplantae</taxon>
        <taxon>Streptophyta</taxon>
        <taxon>Embryophyta</taxon>
        <taxon>Tracheophyta</taxon>
        <taxon>Spermatophyta</taxon>
        <taxon>Magnoliopsida</taxon>
        <taxon>Magnoliidae</taxon>
        <taxon>Laurales</taxon>
        <taxon>Calycanthaceae</taxon>
        <taxon>Calycanthus</taxon>
    </lineage>
</organism>
<dbReference type="EC" id="1.10.3.9" evidence="1"/>
<dbReference type="EMBL" id="AJ428413">
    <property type="protein sequence ID" value="CAD28701.1"/>
    <property type="molecule type" value="Genomic_DNA"/>
</dbReference>
<dbReference type="RefSeq" id="NP_862734.1">
    <property type="nucleotide sequence ID" value="NC_004993.1"/>
</dbReference>
<dbReference type="SMR" id="Q7YJY8"/>
<dbReference type="GeneID" id="2598005"/>
<dbReference type="GO" id="GO:0009535">
    <property type="term" value="C:chloroplast thylakoid membrane"/>
    <property type="evidence" value="ECO:0007669"/>
    <property type="project" value="UniProtKB-SubCell"/>
</dbReference>
<dbReference type="GO" id="GO:0009523">
    <property type="term" value="C:photosystem II"/>
    <property type="evidence" value="ECO:0007669"/>
    <property type="project" value="UniProtKB-KW"/>
</dbReference>
<dbReference type="GO" id="GO:0016168">
    <property type="term" value="F:chlorophyll binding"/>
    <property type="evidence" value="ECO:0007669"/>
    <property type="project" value="UniProtKB-UniRule"/>
</dbReference>
<dbReference type="GO" id="GO:0045156">
    <property type="term" value="F:electron transporter, transferring electrons within the cyclic electron transport pathway of photosynthesis activity"/>
    <property type="evidence" value="ECO:0007669"/>
    <property type="project" value="InterPro"/>
</dbReference>
<dbReference type="GO" id="GO:0005506">
    <property type="term" value="F:iron ion binding"/>
    <property type="evidence" value="ECO:0007669"/>
    <property type="project" value="UniProtKB-UniRule"/>
</dbReference>
<dbReference type="GO" id="GO:0016682">
    <property type="term" value="F:oxidoreductase activity, acting on diphenols and related substances as donors, oxygen as acceptor"/>
    <property type="evidence" value="ECO:0007669"/>
    <property type="project" value="UniProtKB-UniRule"/>
</dbReference>
<dbReference type="GO" id="GO:0010242">
    <property type="term" value="F:oxygen evolving activity"/>
    <property type="evidence" value="ECO:0007669"/>
    <property type="project" value="UniProtKB-EC"/>
</dbReference>
<dbReference type="GO" id="GO:0009772">
    <property type="term" value="P:photosynthetic electron transport in photosystem II"/>
    <property type="evidence" value="ECO:0007669"/>
    <property type="project" value="InterPro"/>
</dbReference>
<dbReference type="GO" id="GO:0009635">
    <property type="term" value="P:response to herbicide"/>
    <property type="evidence" value="ECO:0007669"/>
    <property type="project" value="UniProtKB-KW"/>
</dbReference>
<dbReference type="CDD" id="cd09289">
    <property type="entry name" value="Photosystem-II_D1"/>
    <property type="match status" value="1"/>
</dbReference>
<dbReference type="FunFam" id="1.20.85.10:FF:000002">
    <property type="entry name" value="Photosystem II protein D1"/>
    <property type="match status" value="1"/>
</dbReference>
<dbReference type="Gene3D" id="1.20.85.10">
    <property type="entry name" value="Photosystem II protein D1-like"/>
    <property type="match status" value="1"/>
</dbReference>
<dbReference type="HAMAP" id="MF_01379">
    <property type="entry name" value="PSII_PsbA_D1"/>
    <property type="match status" value="1"/>
</dbReference>
<dbReference type="InterPro" id="IPR055266">
    <property type="entry name" value="D1/D2"/>
</dbReference>
<dbReference type="InterPro" id="IPR036854">
    <property type="entry name" value="Photo_II_D1/D2_sf"/>
</dbReference>
<dbReference type="InterPro" id="IPR000484">
    <property type="entry name" value="Photo_RC_L/M"/>
</dbReference>
<dbReference type="InterPro" id="IPR055265">
    <property type="entry name" value="Photo_RC_L/M_CS"/>
</dbReference>
<dbReference type="InterPro" id="IPR005867">
    <property type="entry name" value="PSII_D1"/>
</dbReference>
<dbReference type="NCBIfam" id="TIGR01151">
    <property type="entry name" value="psbA"/>
    <property type="match status" value="1"/>
</dbReference>
<dbReference type="PANTHER" id="PTHR33149:SF12">
    <property type="entry name" value="PHOTOSYSTEM II D2 PROTEIN"/>
    <property type="match status" value="1"/>
</dbReference>
<dbReference type="PANTHER" id="PTHR33149">
    <property type="entry name" value="PHOTOSYSTEM II PROTEIN D1"/>
    <property type="match status" value="1"/>
</dbReference>
<dbReference type="Pfam" id="PF00124">
    <property type="entry name" value="Photo_RC"/>
    <property type="match status" value="1"/>
</dbReference>
<dbReference type="PRINTS" id="PR00256">
    <property type="entry name" value="REACTNCENTRE"/>
</dbReference>
<dbReference type="SUPFAM" id="SSF81483">
    <property type="entry name" value="Bacterial photosystem II reaction centre, L and M subunits"/>
    <property type="match status" value="1"/>
</dbReference>
<dbReference type="PROSITE" id="PS00244">
    <property type="entry name" value="REACTION_CENTER"/>
    <property type="match status" value="1"/>
</dbReference>
<gene>
    <name evidence="1" type="primary">psbA</name>
</gene>
<feature type="initiator methionine" description="Removed" evidence="1">
    <location>
        <position position="1"/>
    </location>
</feature>
<feature type="chain" id="PRO_0000339956" description="Photosystem II protein D1" evidence="1">
    <location>
        <begin position="2"/>
        <end position="344"/>
    </location>
</feature>
<feature type="propeptide" id="PRO_0000339957" evidence="1">
    <location>
        <begin position="345"/>
        <end position="353"/>
    </location>
</feature>
<feature type="transmembrane region" description="Helical" evidence="1">
    <location>
        <begin position="29"/>
        <end position="46"/>
    </location>
</feature>
<feature type="transmembrane region" description="Helical" evidence="1">
    <location>
        <begin position="118"/>
        <end position="133"/>
    </location>
</feature>
<feature type="transmembrane region" description="Helical" evidence="1">
    <location>
        <begin position="142"/>
        <end position="156"/>
    </location>
</feature>
<feature type="transmembrane region" description="Helical" evidence="1">
    <location>
        <begin position="197"/>
        <end position="218"/>
    </location>
</feature>
<feature type="transmembrane region" description="Helical" evidence="1">
    <location>
        <begin position="274"/>
        <end position="288"/>
    </location>
</feature>
<feature type="binding site" description="axial binding residue" evidence="1">
    <location>
        <position position="118"/>
    </location>
    <ligand>
        <name>chlorophyll a</name>
        <dbReference type="ChEBI" id="CHEBI:58416"/>
        <label>ChlzD1</label>
    </ligand>
    <ligandPart>
        <name>Mg</name>
        <dbReference type="ChEBI" id="CHEBI:25107"/>
    </ligandPart>
</feature>
<feature type="binding site" evidence="1">
    <location>
        <position position="126"/>
    </location>
    <ligand>
        <name>pheophytin a</name>
        <dbReference type="ChEBI" id="CHEBI:136840"/>
        <label>D1</label>
    </ligand>
</feature>
<feature type="binding site" evidence="1">
    <location>
        <position position="170"/>
    </location>
    <ligand>
        <name>[CaMn4O5] cluster</name>
        <dbReference type="ChEBI" id="CHEBI:189552"/>
    </ligand>
</feature>
<feature type="binding site" evidence="1">
    <location>
        <position position="189"/>
    </location>
    <ligand>
        <name>[CaMn4O5] cluster</name>
        <dbReference type="ChEBI" id="CHEBI:189552"/>
    </ligand>
</feature>
<feature type="binding site" description="axial binding residue" evidence="1">
    <location>
        <position position="198"/>
    </location>
    <ligand>
        <name>chlorophyll a</name>
        <dbReference type="ChEBI" id="CHEBI:58416"/>
        <label>PD1</label>
    </ligand>
    <ligandPart>
        <name>Mg</name>
        <dbReference type="ChEBI" id="CHEBI:25107"/>
    </ligandPart>
</feature>
<feature type="binding site" evidence="1">
    <location>
        <position position="215"/>
    </location>
    <ligand>
        <name>a quinone</name>
        <dbReference type="ChEBI" id="CHEBI:132124"/>
        <label>B</label>
    </ligand>
</feature>
<feature type="binding site" evidence="1">
    <location>
        <position position="215"/>
    </location>
    <ligand>
        <name>Fe cation</name>
        <dbReference type="ChEBI" id="CHEBI:24875"/>
        <note>ligand shared with heterodimeric partner</note>
    </ligand>
</feature>
<feature type="binding site" evidence="1">
    <location>
        <begin position="264"/>
        <end position="265"/>
    </location>
    <ligand>
        <name>a quinone</name>
        <dbReference type="ChEBI" id="CHEBI:132124"/>
        <label>B</label>
    </ligand>
</feature>
<feature type="binding site" evidence="1">
    <location>
        <position position="272"/>
    </location>
    <ligand>
        <name>Fe cation</name>
        <dbReference type="ChEBI" id="CHEBI:24875"/>
        <note>ligand shared with heterodimeric partner</note>
    </ligand>
</feature>
<feature type="binding site" evidence="1">
    <location>
        <position position="332"/>
    </location>
    <ligand>
        <name>[CaMn4O5] cluster</name>
        <dbReference type="ChEBI" id="CHEBI:189552"/>
    </ligand>
</feature>
<feature type="binding site" evidence="1">
    <location>
        <position position="333"/>
    </location>
    <ligand>
        <name>[CaMn4O5] cluster</name>
        <dbReference type="ChEBI" id="CHEBI:189552"/>
    </ligand>
</feature>
<feature type="binding site" evidence="1">
    <location>
        <position position="342"/>
    </location>
    <ligand>
        <name>[CaMn4O5] cluster</name>
        <dbReference type="ChEBI" id="CHEBI:189552"/>
    </ligand>
</feature>
<feature type="binding site" evidence="1">
    <location>
        <position position="344"/>
    </location>
    <ligand>
        <name>[CaMn4O5] cluster</name>
        <dbReference type="ChEBI" id="CHEBI:189552"/>
    </ligand>
</feature>
<feature type="site" description="Tyrosine radical intermediate" evidence="1">
    <location>
        <position position="161"/>
    </location>
</feature>
<feature type="site" description="Stabilizes free radical intermediate" evidence="1">
    <location>
        <position position="190"/>
    </location>
</feature>
<feature type="site" description="Cleavage; by CTPA" evidence="1">
    <location>
        <begin position="344"/>
        <end position="345"/>
    </location>
</feature>
<feature type="modified residue" description="N-acetylthreonine" evidence="1">
    <location>
        <position position="2"/>
    </location>
</feature>
<feature type="modified residue" description="Phosphothreonine" evidence="1">
    <location>
        <position position="2"/>
    </location>
</feature>
<accession>Q7YJY8</accession>
<reference key="1">
    <citation type="journal article" date="2003" name="Plant Syst. Evol.">
        <title>The chloroplast genome of the 'basal' angiosperm Calycanthus fertilis -- structural and phylogenetic analyses.</title>
        <authorList>
            <person name="Goremykin V."/>
            <person name="Hirsch-Ernst K.I."/>
            <person name="Woelfl S."/>
            <person name="Hellwig F.H."/>
        </authorList>
    </citation>
    <scope>NUCLEOTIDE SEQUENCE [LARGE SCALE GENOMIC DNA]</scope>
</reference>
<geneLocation type="chloroplast"/>
<proteinExistence type="inferred from homology"/>
<keyword id="KW-0007">Acetylation</keyword>
<keyword id="KW-0106">Calcium</keyword>
<keyword id="KW-0148">Chlorophyll</keyword>
<keyword id="KW-0150">Chloroplast</keyword>
<keyword id="KW-0157">Chromophore</keyword>
<keyword id="KW-0249">Electron transport</keyword>
<keyword id="KW-0359">Herbicide resistance</keyword>
<keyword id="KW-0408">Iron</keyword>
<keyword id="KW-0460">Magnesium</keyword>
<keyword id="KW-0464">Manganese</keyword>
<keyword id="KW-0472">Membrane</keyword>
<keyword id="KW-0479">Metal-binding</keyword>
<keyword id="KW-0560">Oxidoreductase</keyword>
<keyword id="KW-0597">Phosphoprotein</keyword>
<keyword id="KW-0602">Photosynthesis</keyword>
<keyword id="KW-0604">Photosystem II</keyword>
<keyword id="KW-0934">Plastid</keyword>
<keyword id="KW-0793">Thylakoid</keyword>
<keyword id="KW-0812">Transmembrane</keyword>
<keyword id="KW-1133">Transmembrane helix</keyword>
<keyword id="KW-0813">Transport</keyword>
<name>PSBA_CALFG</name>